<keyword id="KW-0007">Acetylation</keyword>
<keyword id="KW-0687">Ribonucleoprotein</keyword>
<keyword id="KW-0689">Ribosomal protein</keyword>
<keyword id="KW-0694">RNA-binding</keyword>
<keyword id="KW-0699">rRNA-binding</keyword>
<keyword id="KW-0820">tRNA-binding</keyword>
<sequence>MAKLHDYYKDEVVKKLMTEFNYNSVMQVPRVEKITLNMGVGEAIADKKLLDNAAADLAAISGQKPLITKARKSVAGFKIRQGYPIGCKVTLRGERMWEFFERLITIAVPRIRDFRGLSAKSFDGRGNYSMGVREQIIFPEIDYDKVDRVRGLDITITTTAKSDEEGRALLAAFDFPFRK</sequence>
<name>RL5_ECOHS</name>
<evidence type="ECO:0000255" key="1">
    <source>
        <dbReference type="HAMAP-Rule" id="MF_01333"/>
    </source>
</evidence>
<evidence type="ECO:0000305" key="2"/>
<accession>A8A5B3</accession>
<organism>
    <name type="scientific">Escherichia coli O9:H4 (strain HS)</name>
    <dbReference type="NCBI Taxonomy" id="331112"/>
    <lineage>
        <taxon>Bacteria</taxon>
        <taxon>Pseudomonadati</taxon>
        <taxon>Pseudomonadota</taxon>
        <taxon>Gammaproteobacteria</taxon>
        <taxon>Enterobacterales</taxon>
        <taxon>Enterobacteriaceae</taxon>
        <taxon>Escherichia</taxon>
    </lineage>
</organism>
<proteinExistence type="inferred from homology"/>
<reference key="1">
    <citation type="journal article" date="2008" name="J. Bacteriol.">
        <title>The pangenome structure of Escherichia coli: comparative genomic analysis of E. coli commensal and pathogenic isolates.</title>
        <authorList>
            <person name="Rasko D.A."/>
            <person name="Rosovitz M.J."/>
            <person name="Myers G.S.A."/>
            <person name="Mongodin E.F."/>
            <person name="Fricke W.F."/>
            <person name="Gajer P."/>
            <person name="Crabtree J."/>
            <person name="Sebaihia M."/>
            <person name="Thomson N.R."/>
            <person name="Chaudhuri R."/>
            <person name="Henderson I.R."/>
            <person name="Sperandio V."/>
            <person name="Ravel J."/>
        </authorList>
    </citation>
    <scope>NUCLEOTIDE SEQUENCE [LARGE SCALE GENOMIC DNA]</scope>
    <source>
        <strain>HS</strain>
    </source>
</reference>
<comment type="function">
    <text evidence="1">This is one of the proteins that bind and probably mediate the attachment of the 5S RNA into the large ribosomal subunit, where it forms part of the central protuberance. In the 70S ribosome it contacts protein S13 of the 30S subunit (bridge B1b), connecting the 2 subunits; this bridge is implicated in subunit movement. Contacts the P site tRNA; the 5S rRNA and some of its associated proteins might help stabilize positioning of ribosome-bound tRNAs.</text>
</comment>
<comment type="subunit">
    <text evidence="1">Part of the 50S ribosomal subunit; part of the 5S rRNA/L5/L18/L25 subcomplex. Contacts the 5S rRNA and the P site tRNA. Forms a bridge to the 30S subunit in the 70S ribosome.</text>
</comment>
<comment type="similarity">
    <text evidence="1">Belongs to the universal ribosomal protein uL5 family.</text>
</comment>
<gene>
    <name evidence="1" type="primary">rplE</name>
    <name type="ordered locus">EcHS_A3502</name>
</gene>
<dbReference type="EMBL" id="CP000802">
    <property type="protein sequence ID" value="ABV07717.1"/>
    <property type="molecule type" value="Genomic_DNA"/>
</dbReference>
<dbReference type="RefSeq" id="WP_001096200.1">
    <property type="nucleotide sequence ID" value="NC_009800.1"/>
</dbReference>
<dbReference type="SMR" id="A8A5B3"/>
<dbReference type="GeneID" id="93778679"/>
<dbReference type="KEGG" id="ecx:EcHS_A3502"/>
<dbReference type="HOGENOM" id="CLU_061015_2_1_6"/>
<dbReference type="GO" id="GO:1990904">
    <property type="term" value="C:ribonucleoprotein complex"/>
    <property type="evidence" value="ECO:0007669"/>
    <property type="project" value="UniProtKB-KW"/>
</dbReference>
<dbReference type="GO" id="GO:0005840">
    <property type="term" value="C:ribosome"/>
    <property type="evidence" value="ECO:0007669"/>
    <property type="project" value="UniProtKB-KW"/>
</dbReference>
<dbReference type="GO" id="GO:0019843">
    <property type="term" value="F:rRNA binding"/>
    <property type="evidence" value="ECO:0007669"/>
    <property type="project" value="UniProtKB-UniRule"/>
</dbReference>
<dbReference type="GO" id="GO:0003735">
    <property type="term" value="F:structural constituent of ribosome"/>
    <property type="evidence" value="ECO:0007669"/>
    <property type="project" value="InterPro"/>
</dbReference>
<dbReference type="GO" id="GO:0000049">
    <property type="term" value="F:tRNA binding"/>
    <property type="evidence" value="ECO:0007669"/>
    <property type="project" value="UniProtKB-UniRule"/>
</dbReference>
<dbReference type="GO" id="GO:0006412">
    <property type="term" value="P:translation"/>
    <property type="evidence" value="ECO:0007669"/>
    <property type="project" value="UniProtKB-UniRule"/>
</dbReference>
<dbReference type="FunFam" id="3.30.1440.10:FF:000001">
    <property type="entry name" value="50S ribosomal protein L5"/>
    <property type="match status" value="1"/>
</dbReference>
<dbReference type="Gene3D" id="3.30.1440.10">
    <property type="match status" value="1"/>
</dbReference>
<dbReference type="HAMAP" id="MF_01333_B">
    <property type="entry name" value="Ribosomal_uL5_B"/>
    <property type="match status" value="1"/>
</dbReference>
<dbReference type="InterPro" id="IPR002132">
    <property type="entry name" value="Ribosomal_uL5"/>
</dbReference>
<dbReference type="InterPro" id="IPR020930">
    <property type="entry name" value="Ribosomal_uL5_bac-type"/>
</dbReference>
<dbReference type="InterPro" id="IPR031309">
    <property type="entry name" value="Ribosomal_uL5_C"/>
</dbReference>
<dbReference type="InterPro" id="IPR020929">
    <property type="entry name" value="Ribosomal_uL5_CS"/>
</dbReference>
<dbReference type="InterPro" id="IPR022803">
    <property type="entry name" value="Ribosomal_uL5_dom_sf"/>
</dbReference>
<dbReference type="InterPro" id="IPR031310">
    <property type="entry name" value="Ribosomal_uL5_N"/>
</dbReference>
<dbReference type="NCBIfam" id="NF000585">
    <property type="entry name" value="PRK00010.1"/>
    <property type="match status" value="1"/>
</dbReference>
<dbReference type="PANTHER" id="PTHR11994">
    <property type="entry name" value="60S RIBOSOMAL PROTEIN L11-RELATED"/>
    <property type="match status" value="1"/>
</dbReference>
<dbReference type="Pfam" id="PF00281">
    <property type="entry name" value="Ribosomal_L5"/>
    <property type="match status" value="1"/>
</dbReference>
<dbReference type="Pfam" id="PF00673">
    <property type="entry name" value="Ribosomal_L5_C"/>
    <property type="match status" value="1"/>
</dbReference>
<dbReference type="PIRSF" id="PIRSF002161">
    <property type="entry name" value="Ribosomal_L5"/>
    <property type="match status" value="1"/>
</dbReference>
<dbReference type="SUPFAM" id="SSF55282">
    <property type="entry name" value="RL5-like"/>
    <property type="match status" value="1"/>
</dbReference>
<dbReference type="PROSITE" id="PS00358">
    <property type="entry name" value="RIBOSOMAL_L5"/>
    <property type="match status" value="1"/>
</dbReference>
<protein>
    <recommendedName>
        <fullName evidence="1">Large ribosomal subunit protein uL5</fullName>
    </recommendedName>
    <alternativeName>
        <fullName evidence="2">50S ribosomal protein L5</fullName>
    </alternativeName>
</protein>
<feature type="chain" id="PRO_1000067619" description="Large ribosomal subunit protein uL5">
    <location>
        <begin position="1"/>
        <end position="179"/>
    </location>
</feature>
<feature type="modified residue" description="N6-acetyllysine" evidence="1">
    <location>
        <position position="3"/>
    </location>
</feature>